<comment type="catalytic activity">
    <reaction evidence="1">
        <text>1-(5-phospho-beta-D-ribosyl)-5-[(5-phospho-beta-D-ribosylamino)methylideneamino]imidazole-4-carboxamide = 5-[(5-phospho-1-deoxy-D-ribulos-1-ylimino)methylamino]-1-(5-phospho-beta-D-ribosyl)imidazole-4-carboxamide</text>
        <dbReference type="Rhea" id="RHEA:15469"/>
        <dbReference type="ChEBI" id="CHEBI:58435"/>
        <dbReference type="ChEBI" id="CHEBI:58525"/>
        <dbReference type="EC" id="5.3.1.16"/>
    </reaction>
</comment>
<comment type="pathway">
    <text evidence="1">Amino-acid biosynthesis; L-histidine biosynthesis; L-histidine from 5-phospho-alpha-D-ribose 1-diphosphate: step 4/9.</text>
</comment>
<comment type="subcellular location">
    <subcellularLocation>
        <location evidence="1">Cytoplasm</location>
    </subcellularLocation>
</comment>
<comment type="similarity">
    <text evidence="1">Belongs to the HisA/HisF family.</text>
</comment>
<organism>
    <name type="scientific">Polaromonas sp. (strain JS666 / ATCC BAA-500)</name>
    <dbReference type="NCBI Taxonomy" id="296591"/>
    <lineage>
        <taxon>Bacteria</taxon>
        <taxon>Pseudomonadati</taxon>
        <taxon>Pseudomonadota</taxon>
        <taxon>Betaproteobacteria</taxon>
        <taxon>Burkholderiales</taxon>
        <taxon>Comamonadaceae</taxon>
        <taxon>Polaromonas</taxon>
    </lineage>
</organism>
<evidence type="ECO:0000255" key="1">
    <source>
        <dbReference type="HAMAP-Rule" id="MF_01014"/>
    </source>
</evidence>
<reference key="1">
    <citation type="journal article" date="2008" name="Appl. Environ. Microbiol.">
        <title>The genome of Polaromonas sp. strain JS666: insights into the evolution of a hydrocarbon- and xenobiotic-degrading bacterium, and features of relevance to biotechnology.</title>
        <authorList>
            <person name="Mattes T.E."/>
            <person name="Alexander A.K."/>
            <person name="Richardson P.M."/>
            <person name="Munk A.C."/>
            <person name="Han C.S."/>
            <person name="Stothard P."/>
            <person name="Coleman N.V."/>
        </authorList>
    </citation>
    <scope>NUCLEOTIDE SEQUENCE [LARGE SCALE GENOMIC DNA]</scope>
    <source>
        <strain>JS666 / ATCC BAA-500</strain>
    </source>
</reference>
<feature type="chain" id="PRO_0000290506" description="1-(5-phosphoribosyl)-5-[(5-phosphoribosylamino)methylideneamino] imidazole-4-carboxamide isomerase">
    <location>
        <begin position="1"/>
        <end position="246"/>
    </location>
</feature>
<feature type="active site" description="Proton acceptor" evidence="1">
    <location>
        <position position="8"/>
    </location>
</feature>
<feature type="active site" description="Proton donor" evidence="1">
    <location>
        <position position="131"/>
    </location>
</feature>
<name>HIS4_POLSJ</name>
<accession>Q12FC8</accession>
<sequence length="246" mass="26089">MLLIPAIDLKDGHCVRLKQGDMDQSTIFSEDPAAMARSWVDKGARRLHLVDLNGAFAGKPKNEAAIKKILAEVGSEIDVQLGGGIRDLDTIERYLDAGLRYVIIGTAAVKNPGFLQDACTAFGGHIIVGLDAKDGKVATDGWSKLTGHEVIDLGKKFQDYGVESIIYTDIGRDGMLSGINIEATVRLAQALTIPVIASGGLSNMADIEALCDVEEEGVEGVICGRSIYSGDLDFAAAQARADELNG</sequence>
<gene>
    <name evidence="1" type="primary">hisA</name>
    <name type="ordered locus">Bpro_0808</name>
</gene>
<protein>
    <recommendedName>
        <fullName evidence="1">1-(5-phosphoribosyl)-5-[(5-phosphoribosylamino)methylideneamino] imidazole-4-carboxamide isomerase</fullName>
        <ecNumber evidence="1">5.3.1.16</ecNumber>
    </recommendedName>
    <alternativeName>
        <fullName evidence="1">Phosphoribosylformimino-5-aminoimidazole carboxamide ribotide isomerase</fullName>
    </alternativeName>
</protein>
<dbReference type="EC" id="5.3.1.16" evidence="1"/>
<dbReference type="EMBL" id="CP000316">
    <property type="protein sequence ID" value="ABE42764.1"/>
    <property type="molecule type" value="Genomic_DNA"/>
</dbReference>
<dbReference type="RefSeq" id="WP_011481767.1">
    <property type="nucleotide sequence ID" value="NC_007948.1"/>
</dbReference>
<dbReference type="SMR" id="Q12FC8"/>
<dbReference type="STRING" id="296591.Bpro_0808"/>
<dbReference type="KEGG" id="pol:Bpro_0808"/>
<dbReference type="eggNOG" id="COG0106">
    <property type="taxonomic scope" value="Bacteria"/>
</dbReference>
<dbReference type="HOGENOM" id="CLU_048577_1_1_4"/>
<dbReference type="OrthoDB" id="9807749at2"/>
<dbReference type="UniPathway" id="UPA00031">
    <property type="reaction ID" value="UER00009"/>
</dbReference>
<dbReference type="Proteomes" id="UP000001983">
    <property type="component" value="Chromosome"/>
</dbReference>
<dbReference type="GO" id="GO:0005737">
    <property type="term" value="C:cytoplasm"/>
    <property type="evidence" value="ECO:0007669"/>
    <property type="project" value="UniProtKB-SubCell"/>
</dbReference>
<dbReference type="GO" id="GO:0003949">
    <property type="term" value="F:1-(5-phosphoribosyl)-5-[(5-phosphoribosylamino)methylideneamino]imidazole-4-carboxamide isomerase activity"/>
    <property type="evidence" value="ECO:0007669"/>
    <property type="project" value="UniProtKB-UniRule"/>
</dbReference>
<dbReference type="GO" id="GO:0000105">
    <property type="term" value="P:L-histidine biosynthetic process"/>
    <property type="evidence" value="ECO:0007669"/>
    <property type="project" value="UniProtKB-UniRule"/>
</dbReference>
<dbReference type="GO" id="GO:0000162">
    <property type="term" value="P:L-tryptophan biosynthetic process"/>
    <property type="evidence" value="ECO:0007669"/>
    <property type="project" value="TreeGrafter"/>
</dbReference>
<dbReference type="CDD" id="cd04732">
    <property type="entry name" value="HisA"/>
    <property type="match status" value="1"/>
</dbReference>
<dbReference type="FunFam" id="3.20.20.70:FF:000009">
    <property type="entry name" value="1-(5-phosphoribosyl)-5-[(5-phosphoribosylamino)methylideneamino] imidazole-4-carboxamide isomerase"/>
    <property type="match status" value="1"/>
</dbReference>
<dbReference type="Gene3D" id="3.20.20.70">
    <property type="entry name" value="Aldolase class I"/>
    <property type="match status" value="1"/>
</dbReference>
<dbReference type="HAMAP" id="MF_01014">
    <property type="entry name" value="HisA"/>
    <property type="match status" value="1"/>
</dbReference>
<dbReference type="InterPro" id="IPR013785">
    <property type="entry name" value="Aldolase_TIM"/>
</dbReference>
<dbReference type="InterPro" id="IPR006062">
    <property type="entry name" value="His_biosynth"/>
</dbReference>
<dbReference type="InterPro" id="IPR006063">
    <property type="entry name" value="HisA_bact_arch"/>
</dbReference>
<dbReference type="InterPro" id="IPR044524">
    <property type="entry name" value="Isoase_HisA-like"/>
</dbReference>
<dbReference type="InterPro" id="IPR023016">
    <property type="entry name" value="Isoase_HisA-like_bact"/>
</dbReference>
<dbReference type="InterPro" id="IPR011060">
    <property type="entry name" value="RibuloseP-bd_barrel"/>
</dbReference>
<dbReference type="NCBIfam" id="TIGR00007">
    <property type="entry name" value="1-(5-phosphoribosyl)-5-[(5-phosphoribosylamino)methylideneamino]imidazole-4-carboxamide isomerase"/>
    <property type="match status" value="1"/>
</dbReference>
<dbReference type="NCBIfam" id="NF010112">
    <property type="entry name" value="PRK13585.1"/>
    <property type="match status" value="1"/>
</dbReference>
<dbReference type="PANTHER" id="PTHR43090">
    <property type="entry name" value="1-(5-PHOSPHORIBOSYL)-5-[(5-PHOSPHORIBOSYLAMINO)METHYLIDENEAMINO] IMIDAZOLE-4-CARBOXAMIDE ISOMERASE"/>
    <property type="match status" value="1"/>
</dbReference>
<dbReference type="PANTHER" id="PTHR43090:SF2">
    <property type="entry name" value="1-(5-PHOSPHORIBOSYL)-5-[(5-PHOSPHORIBOSYLAMINO)METHYLIDENEAMINO] IMIDAZOLE-4-CARBOXAMIDE ISOMERASE"/>
    <property type="match status" value="1"/>
</dbReference>
<dbReference type="Pfam" id="PF00977">
    <property type="entry name" value="His_biosynth"/>
    <property type="match status" value="1"/>
</dbReference>
<dbReference type="SUPFAM" id="SSF51366">
    <property type="entry name" value="Ribulose-phoshate binding barrel"/>
    <property type="match status" value="1"/>
</dbReference>
<keyword id="KW-0028">Amino-acid biosynthesis</keyword>
<keyword id="KW-0963">Cytoplasm</keyword>
<keyword id="KW-0368">Histidine biosynthesis</keyword>
<keyword id="KW-0413">Isomerase</keyword>
<keyword id="KW-1185">Reference proteome</keyword>
<proteinExistence type="inferred from homology"/>